<evidence type="ECO:0000255" key="1">
    <source>
        <dbReference type="HAMAP-Rule" id="MF_01719"/>
    </source>
</evidence>
<comment type="function">
    <text evidence="1">Part of the ABC transporter complex MetNIQ involved in methionine import. Responsible for energy coupling to the transport system.</text>
</comment>
<comment type="catalytic activity">
    <reaction evidence="1">
        <text>L-methionine(out) + ATP + H2O = L-methionine(in) + ADP + phosphate + H(+)</text>
        <dbReference type="Rhea" id="RHEA:29779"/>
        <dbReference type="ChEBI" id="CHEBI:15377"/>
        <dbReference type="ChEBI" id="CHEBI:15378"/>
        <dbReference type="ChEBI" id="CHEBI:30616"/>
        <dbReference type="ChEBI" id="CHEBI:43474"/>
        <dbReference type="ChEBI" id="CHEBI:57844"/>
        <dbReference type="ChEBI" id="CHEBI:456216"/>
        <dbReference type="EC" id="7.4.2.11"/>
    </reaction>
</comment>
<comment type="catalytic activity">
    <reaction evidence="1">
        <text>D-methionine(out) + ATP + H2O = D-methionine(in) + ADP + phosphate + H(+)</text>
        <dbReference type="Rhea" id="RHEA:29767"/>
        <dbReference type="ChEBI" id="CHEBI:15377"/>
        <dbReference type="ChEBI" id="CHEBI:15378"/>
        <dbReference type="ChEBI" id="CHEBI:30616"/>
        <dbReference type="ChEBI" id="CHEBI:43474"/>
        <dbReference type="ChEBI" id="CHEBI:57932"/>
        <dbReference type="ChEBI" id="CHEBI:456216"/>
        <dbReference type="EC" id="7.4.2.11"/>
    </reaction>
</comment>
<comment type="subunit">
    <text evidence="1">The complex is composed of two ATP-binding proteins (MetN), two transmembrane proteins (MetI) and a solute-binding protein (MetQ).</text>
</comment>
<comment type="subcellular location">
    <subcellularLocation>
        <location evidence="1">Cell membrane</location>
        <topology evidence="1">Peripheral membrane protein</topology>
    </subcellularLocation>
</comment>
<comment type="similarity">
    <text evidence="1">Belongs to the ABC transporter superfamily. Methionine importer (TC 3.A.1.24) family.</text>
</comment>
<gene>
    <name evidence="1" type="primary">metN2</name>
    <name type="ordered locus">lmo2419</name>
</gene>
<proteinExistence type="inferred from homology"/>
<feature type="chain" id="PRO_0000270329" description="Methionine import ATP-binding protein MetN 2">
    <location>
        <begin position="1"/>
        <end position="340"/>
    </location>
</feature>
<feature type="domain" description="ABC transporter" evidence="1">
    <location>
        <begin position="2"/>
        <end position="241"/>
    </location>
</feature>
<feature type="binding site" evidence="1">
    <location>
        <begin position="38"/>
        <end position="45"/>
    </location>
    <ligand>
        <name>ATP</name>
        <dbReference type="ChEBI" id="CHEBI:30616"/>
    </ligand>
</feature>
<sequence>MITLQNVVKEYTSRNNKVLAVDHVDLEIEQGEIFGVVGYSGAGKSTLIRMFNGLELPSAGTVEVDNLLISQIRGSKLRKARQQIGMIFQHFNLLWSRTVAENIAFPLEIAGVRGEKRRFRVNELIRLVGLEGKENAYPAELSGGQKQRVGIARALANNPKVLLCDEATSALDPQTTDEVLELLLDINKRLNLTIIVITHEMHVIRKICNRVAVMENGKVVELGDVLDVFRHPQEKVTQRFVRQVTDSDETEELIHLLLDNYAEGKIVKLLFMSENATQPVISQVAKENDVMLNVLHGNLTQTQNGAYGTLYVQVLGTEDAINASLTQLRQLKVETEVLER</sequence>
<accession>Q8Y4L8</accession>
<name>METN2_LISMO</name>
<organism>
    <name type="scientific">Listeria monocytogenes serovar 1/2a (strain ATCC BAA-679 / EGD-e)</name>
    <dbReference type="NCBI Taxonomy" id="169963"/>
    <lineage>
        <taxon>Bacteria</taxon>
        <taxon>Bacillati</taxon>
        <taxon>Bacillota</taxon>
        <taxon>Bacilli</taxon>
        <taxon>Bacillales</taxon>
        <taxon>Listeriaceae</taxon>
        <taxon>Listeria</taxon>
    </lineage>
</organism>
<reference key="1">
    <citation type="journal article" date="2001" name="Science">
        <title>Comparative genomics of Listeria species.</title>
        <authorList>
            <person name="Glaser P."/>
            <person name="Frangeul L."/>
            <person name="Buchrieser C."/>
            <person name="Rusniok C."/>
            <person name="Amend A."/>
            <person name="Baquero F."/>
            <person name="Berche P."/>
            <person name="Bloecker H."/>
            <person name="Brandt P."/>
            <person name="Chakraborty T."/>
            <person name="Charbit A."/>
            <person name="Chetouani F."/>
            <person name="Couve E."/>
            <person name="de Daruvar A."/>
            <person name="Dehoux P."/>
            <person name="Domann E."/>
            <person name="Dominguez-Bernal G."/>
            <person name="Duchaud E."/>
            <person name="Durant L."/>
            <person name="Dussurget O."/>
            <person name="Entian K.-D."/>
            <person name="Fsihi H."/>
            <person name="Garcia-del Portillo F."/>
            <person name="Garrido P."/>
            <person name="Gautier L."/>
            <person name="Goebel W."/>
            <person name="Gomez-Lopez N."/>
            <person name="Hain T."/>
            <person name="Hauf J."/>
            <person name="Jackson D."/>
            <person name="Jones L.-M."/>
            <person name="Kaerst U."/>
            <person name="Kreft J."/>
            <person name="Kuhn M."/>
            <person name="Kunst F."/>
            <person name="Kurapkat G."/>
            <person name="Madueno E."/>
            <person name="Maitournam A."/>
            <person name="Mata Vicente J."/>
            <person name="Ng E."/>
            <person name="Nedjari H."/>
            <person name="Nordsiek G."/>
            <person name="Novella S."/>
            <person name="de Pablos B."/>
            <person name="Perez-Diaz J.-C."/>
            <person name="Purcell R."/>
            <person name="Remmel B."/>
            <person name="Rose M."/>
            <person name="Schlueter T."/>
            <person name="Simoes N."/>
            <person name="Tierrez A."/>
            <person name="Vazquez-Boland J.-A."/>
            <person name="Voss H."/>
            <person name="Wehland J."/>
            <person name="Cossart P."/>
        </authorList>
    </citation>
    <scope>NUCLEOTIDE SEQUENCE [LARGE SCALE GENOMIC DNA]</scope>
    <source>
        <strain>ATCC BAA-679 / EGD-e</strain>
    </source>
</reference>
<protein>
    <recommendedName>
        <fullName evidence="1">Methionine import ATP-binding protein MetN 2</fullName>
        <ecNumber evidence="1">7.4.2.11</ecNumber>
    </recommendedName>
</protein>
<keyword id="KW-0029">Amino-acid transport</keyword>
<keyword id="KW-0067">ATP-binding</keyword>
<keyword id="KW-1003">Cell membrane</keyword>
<keyword id="KW-0472">Membrane</keyword>
<keyword id="KW-0547">Nucleotide-binding</keyword>
<keyword id="KW-1185">Reference proteome</keyword>
<keyword id="KW-1278">Translocase</keyword>
<keyword id="KW-0813">Transport</keyword>
<dbReference type="EC" id="7.4.2.11" evidence="1"/>
<dbReference type="EMBL" id="AL591983">
    <property type="protein sequence ID" value="CAD00497.1"/>
    <property type="molecule type" value="Genomic_DNA"/>
</dbReference>
<dbReference type="PIR" id="AC1377">
    <property type="entry name" value="AC1377"/>
</dbReference>
<dbReference type="RefSeq" id="NP_465942.1">
    <property type="nucleotide sequence ID" value="NC_003210.1"/>
</dbReference>
<dbReference type="RefSeq" id="WP_003722447.1">
    <property type="nucleotide sequence ID" value="NZ_CP149495.1"/>
</dbReference>
<dbReference type="SMR" id="Q8Y4L8"/>
<dbReference type="STRING" id="169963.gene:17595129"/>
<dbReference type="PaxDb" id="169963-lmo2419"/>
<dbReference type="EnsemblBacteria" id="CAD00497">
    <property type="protein sequence ID" value="CAD00497"/>
    <property type="gene ID" value="CAD00497"/>
</dbReference>
<dbReference type="GeneID" id="987467"/>
<dbReference type="KEGG" id="lmo:lmo2419"/>
<dbReference type="PATRIC" id="fig|169963.11.peg.2477"/>
<dbReference type="eggNOG" id="COG1135">
    <property type="taxonomic scope" value="Bacteria"/>
</dbReference>
<dbReference type="HOGENOM" id="CLU_000604_1_3_9"/>
<dbReference type="OrthoDB" id="9802264at2"/>
<dbReference type="PhylomeDB" id="Q8Y4L8"/>
<dbReference type="BioCyc" id="LMON169963:LMO2419-MONOMER"/>
<dbReference type="Proteomes" id="UP000000817">
    <property type="component" value="Chromosome"/>
</dbReference>
<dbReference type="GO" id="GO:0005886">
    <property type="term" value="C:plasma membrane"/>
    <property type="evidence" value="ECO:0007669"/>
    <property type="project" value="UniProtKB-SubCell"/>
</dbReference>
<dbReference type="GO" id="GO:0033232">
    <property type="term" value="F:ABC-type D-methionine transporter activity"/>
    <property type="evidence" value="ECO:0007669"/>
    <property type="project" value="UniProtKB-EC"/>
</dbReference>
<dbReference type="GO" id="GO:0005524">
    <property type="term" value="F:ATP binding"/>
    <property type="evidence" value="ECO:0007669"/>
    <property type="project" value="UniProtKB-KW"/>
</dbReference>
<dbReference type="GO" id="GO:0016887">
    <property type="term" value="F:ATP hydrolysis activity"/>
    <property type="evidence" value="ECO:0007669"/>
    <property type="project" value="InterPro"/>
</dbReference>
<dbReference type="CDD" id="cd03258">
    <property type="entry name" value="ABC_MetN_methionine_transporter"/>
    <property type="match status" value="1"/>
</dbReference>
<dbReference type="FunFam" id="3.40.50.300:FF:000056">
    <property type="entry name" value="Cell division ATP-binding protein FtsE"/>
    <property type="match status" value="1"/>
</dbReference>
<dbReference type="Gene3D" id="3.30.70.260">
    <property type="match status" value="1"/>
</dbReference>
<dbReference type="Gene3D" id="3.40.50.300">
    <property type="entry name" value="P-loop containing nucleotide triphosphate hydrolases"/>
    <property type="match status" value="1"/>
</dbReference>
<dbReference type="InterPro" id="IPR003593">
    <property type="entry name" value="AAA+_ATPase"/>
</dbReference>
<dbReference type="InterPro" id="IPR003439">
    <property type="entry name" value="ABC_transporter-like_ATP-bd"/>
</dbReference>
<dbReference type="InterPro" id="IPR017871">
    <property type="entry name" value="ABC_transporter-like_CS"/>
</dbReference>
<dbReference type="InterPro" id="IPR045865">
    <property type="entry name" value="ACT-like_dom_sf"/>
</dbReference>
<dbReference type="InterPro" id="IPR041701">
    <property type="entry name" value="MetN_ABC"/>
</dbReference>
<dbReference type="InterPro" id="IPR050086">
    <property type="entry name" value="MetN_ABC_transporter-like"/>
</dbReference>
<dbReference type="InterPro" id="IPR018449">
    <property type="entry name" value="NIL_domain"/>
</dbReference>
<dbReference type="InterPro" id="IPR027417">
    <property type="entry name" value="P-loop_NTPase"/>
</dbReference>
<dbReference type="PANTHER" id="PTHR43166">
    <property type="entry name" value="AMINO ACID IMPORT ATP-BINDING PROTEIN"/>
    <property type="match status" value="1"/>
</dbReference>
<dbReference type="PANTHER" id="PTHR43166:SF36">
    <property type="entry name" value="METHIONINE IMPORT ATP-BINDING PROTEIN METN 2"/>
    <property type="match status" value="1"/>
</dbReference>
<dbReference type="Pfam" id="PF00005">
    <property type="entry name" value="ABC_tran"/>
    <property type="match status" value="1"/>
</dbReference>
<dbReference type="Pfam" id="PF09383">
    <property type="entry name" value="NIL"/>
    <property type="match status" value="1"/>
</dbReference>
<dbReference type="SMART" id="SM00382">
    <property type="entry name" value="AAA"/>
    <property type="match status" value="1"/>
</dbReference>
<dbReference type="SMART" id="SM00930">
    <property type="entry name" value="NIL"/>
    <property type="match status" value="1"/>
</dbReference>
<dbReference type="SUPFAM" id="SSF55021">
    <property type="entry name" value="ACT-like"/>
    <property type="match status" value="1"/>
</dbReference>
<dbReference type="SUPFAM" id="SSF52540">
    <property type="entry name" value="P-loop containing nucleoside triphosphate hydrolases"/>
    <property type="match status" value="1"/>
</dbReference>
<dbReference type="PROSITE" id="PS00211">
    <property type="entry name" value="ABC_TRANSPORTER_1"/>
    <property type="match status" value="1"/>
</dbReference>
<dbReference type="PROSITE" id="PS50893">
    <property type="entry name" value="ABC_TRANSPORTER_2"/>
    <property type="match status" value="1"/>
</dbReference>
<dbReference type="PROSITE" id="PS51264">
    <property type="entry name" value="METN"/>
    <property type="match status" value="1"/>
</dbReference>